<name>POTC_ECOL6</name>
<gene>
    <name type="primary">potC</name>
    <name type="ordered locus">c1399</name>
</gene>
<sequence length="264" mass="29111">MIGRLLRGGFMTAIYAYLYIPIIILIVNSFNSSRFGINWQGFTTKWYSLLMNNDSLLQAAQHSLTMAVFSATFATLIGSLTAVALYRYRFRGKPFVSGMLFVVMMSPDIVMAISLLVLFMLLGIQLGFWSLLFSHITFCLPFVVVTVYSRLKGFDVRMLEAAKDLGASEFTILRKIILPLAMPAVAAGWVLSFTLSMDDVVVSSFVTGPSYEILPLKIYSMVKVGVSPEVNALATILLVLSLVMVIASQLIARDKTKGNTGDVK</sequence>
<comment type="function">
    <text evidence="1">Required for the activity of the bacterial periplasmic transport system of putrescine and spermidine.</text>
</comment>
<comment type="subcellular location">
    <subcellularLocation>
        <location evidence="1">Cell inner membrane</location>
        <topology evidence="3">Multi-pass membrane protein</topology>
    </subcellularLocation>
</comment>
<comment type="similarity">
    <text evidence="4">Belongs to the binding-protein-dependent transport system permease family. CysTW subfamily.</text>
</comment>
<protein>
    <recommendedName>
        <fullName>Spermidine/putrescine transport system permease protein PotC</fullName>
    </recommendedName>
</protein>
<organism>
    <name type="scientific">Escherichia coli O6:H1 (strain CFT073 / ATCC 700928 / UPEC)</name>
    <dbReference type="NCBI Taxonomy" id="199310"/>
    <lineage>
        <taxon>Bacteria</taxon>
        <taxon>Pseudomonadati</taxon>
        <taxon>Pseudomonadota</taxon>
        <taxon>Gammaproteobacteria</taxon>
        <taxon>Enterobacterales</taxon>
        <taxon>Enterobacteriaceae</taxon>
        <taxon>Escherichia</taxon>
    </lineage>
</organism>
<proteinExistence type="inferred from homology"/>
<reference key="1">
    <citation type="journal article" date="2002" name="Proc. Natl. Acad. Sci. U.S.A.">
        <title>Extensive mosaic structure revealed by the complete genome sequence of uropathogenic Escherichia coli.</title>
        <authorList>
            <person name="Welch R.A."/>
            <person name="Burland V."/>
            <person name="Plunkett G. III"/>
            <person name="Redford P."/>
            <person name="Roesch P."/>
            <person name="Rasko D."/>
            <person name="Buckles E.L."/>
            <person name="Liou S.-R."/>
            <person name="Boutin A."/>
            <person name="Hackett J."/>
            <person name="Stroud D."/>
            <person name="Mayhew G.F."/>
            <person name="Rose D.J."/>
            <person name="Zhou S."/>
            <person name="Schwartz D.C."/>
            <person name="Perna N.T."/>
            <person name="Mobley H.L.T."/>
            <person name="Donnenberg M.S."/>
            <person name="Blattner F.R."/>
        </authorList>
    </citation>
    <scope>NUCLEOTIDE SEQUENCE [LARGE SCALE GENOMIC DNA]</scope>
    <source>
        <strain>CFT073 / ATCC 700928 / UPEC</strain>
    </source>
</reference>
<accession>P0AFK7</accession>
<accession>P23859</accession>
<feature type="chain" id="PRO_0000060183" description="Spermidine/putrescine transport system permease protein PotC">
    <location>
        <begin position="1"/>
        <end position="264"/>
    </location>
</feature>
<feature type="topological domain" description="Cytoplasmic" evidence="2">
    <location>
        <begin position="1"/>
        <end position="7"/>
    </location>
</feature>
<feature type="transmembrane region" description="Helical" evidence="3">
    <location>
        <begin position="8"/>
        <end position="27"/>
    </location>
</feature>
<feature type="topological domain" description="Periplasmic" evidence="2">
    <location>
        <begin position="28"/>
        <end position="65"/>
    </location>
</feature>
<feature type="transmembrane region" description="Helical" evidence="3">
    <location>
        <begin position="66"/>
        <end position="85"/>
    </location>
</feature>
<feature type="topological domain" description="Cytoplasmic" evidence="2">
    <location>
        <begin position="86"/>
        <end position="100"/>
    </location>
</feature>
<feature type="transmembrane region" description="Helical" evidence="3">
    <location>
        <begin position="101"/>
        <end position="120"/>
    </location>
</feature>
<feature type="topological domain" description="Periplasmic" evidence="2">
    <location>
        <begin position="121"/>
        <end position="128"/>
    </location>
</feature>
<feature type="transmembrane region" description="Helical" evidence="3">
    <location>
        <begin position="129"/>
        <end position="148"/>
    </location>
</feature>
<feature type="topological domain" description="Cytoplasmic" evidence="2">
    <location>
        <begin position="149"/>
        <end position="176"/>
    </location>
</feature>
<feature type="transmembrane region" description="Helical" evidence="3">
    <location>
        <begin position="177"/>
        <end position="196"/>
    </location>
</feature>
<feature type="topological domain" description="Periplasmic" evidence="2">
    <location>
        <begin position="197"/>
        <end position="231"/>
    </location>
</feature>
<feature type="transmembrane region" description="Helical" evidence="3">
    <location>
        <begin position="232"/>
        <end position="251"/>
    </location>
</feature>
<feature type="topological domain" description="Cytoplasmic" evidence="2">
    <location>
        <begin position="252"/>
        <end position="264"/>
    </location>
</feature>
<feature type="domain" description="ABC transmembrane type-1" evidence="3">
    <location>
        <begin position="60"/>
        <end position="248"/>
    </location>
</feature>
<dbReference type="EMBL" id="AE014075">
    <property type="protein sequence ID" value="AAN79868.1"/>
    <property type="molecule type" value="Genomic_DNA"/>
</dbReference>
<dbReference type="RefSeq" id="WP_000580316.1">
    <property type="nucleotide sequence ID" value="NZ_CP051263.1"/>
</dbReference>
<dbReference type="SMR" id="P0AFK7"/>
<dbReference type="STRING" id="199310.c1399"/>
<dbReference type="GeneID" id="93776286"/>
<dbReference type="KEGG" id="ecc:c1399"/>
<dbReference type="eggNOG" id="COG1177">
    <property type="taxonomic scope" value="Bacteria"/>
</dbReference>
<dbReference type="HOGENOM" id="CLU_016047_3_0_6"/>
<dbReference type="BioCyc" id="ECOL199310:C1399-MONOMER"/>
<dbReference type="Proteomes" id="UP000001410">
    <property type="component" value="Chromosome"/>
</dbReference>
<dbReference type="GO" id="GO:0005886">
    <property type="term" value="C:plasma membrane"/>
    <property type="evidence" value="ECO:0007669"/>
    <property type="project" value="UniProtKB-SubCell"/>
</dbReference>
<dbReference type="GO" id="GO:0055085">
    <property type="term" value="P:transmembrane transport"/>
    <property type="evidence" value="ECO:0007669"/>
    <property type="project" value="InterPro"/>
</dbReference>
<dbReference type="CDD" id="cd06261">
    <property type="entry name" value="TM_PBP2"/>
    <property type="match status" value="1"/>
</dbReference>
<dbReference type="FunFam" id="1.10.3720.10:FF:000013">
    <property type="entry name" value="Spermidine/putrescine ABC transporter permease PotC"/>
    <property type="match status" value="1"/>
</dbReference>
<dbReference type="Gene3D" id="1.10.3720.10">
    <property type="entry name" value="MetI-like"/>
    <property type="match status" value="1"/>
</dbReference>
<dbReference type="InterPro" id="IPR051789">
    <property type="entry name" value="Bact_Polyamine_Transport"/>
</dbReference>
<dbReference type="InterPro" id="IPR000515">
    <property type="entry name" value="MetI-like"/>
</dbReference>
<dbReference type="InterPro" id="IPR035906">
    <property type="entry name" value="MetI-like_sf"/>
</dbReference>
<dbReference type="NCBIfam" id="NF007047">
    <property type="entry name" value="PRK09500.1"/>
    <property type="match status" value="1"/>
</dbReference>
<dbReference type="PANTHER" id="PTHR43848">
    <property type="entry name" value="PUTRESCINE TRANSPORT SYSTEM PERMEASE PROTEIN POTI"/>
    <property type="match status" value="1"/>
</dbReference>
<dbReference type="PANTHER" id="PTHR43848:SF5">
    <property type="entry name" value="SPERMIDINE_PUTRESCINE TRANSPORT SYSTEM PERMEASE PROTEIN POTC"/>
    <property type="match status" value="1"/>
</dbReference>
<dbReference type="Pfam" id="PF00528">
    <property type="entry name" value="BPD_transp_1"/>
    <property type="match status" value="1"/>
</dbReference>
<dbReference type="SUPFAM" id="SSF161098">
    <property type="entry name" value="MetI-like"/>
    <property type="match status" value="1"/>
</dbReference>
<dbReference type="PROSITE" id="PS50928">
    <property type="entry name" value="ABC_TM1"/>
    <property type="match status" value="1"/>
</dbReference>
<keyword id="KW-0997">Cell inner membrane</keyword>
<keyword id="KW-1003">Cell membrane</keyword>
<keyword id="KW-0472">Membrane</keyword>
<keyword id="KW-1185">Reference proteome</keyword>
<keyword id="KW-0812">Transmembrane</keyword>
<keyword id="KW-1133">Transmembrane helix</keyword>
<keyword id="KW-0813">Transport</keyword>
<evidence type="ECO:0000250" key="1"/>
<evidence type="ECO:0000255" key="2"/>
<evidence type="ECO:0000255" key="3">
    <source>
        <dbReference type="PROSITE-ProRule" id="PRU00441"/>
    </source>
</evidence>
<evidence type="ECO:0000305" key="4"/>